<reference key="1">
    <citation type="journal article" date="2008" name="J. Bacteriol.">
        <title>The complete genome sequence of Escherichia coli DH10B: insights into the biology of a laboratory workhorse.</title>
        <authorList>
            <person name="Durfee T."/>
            <person name="Nelson R."/>
            <person name="Baldwin S."/>
            <person name="Plunkett G. III"/>
            <person name="Burland V."/>
            <person name="Mau B."/>
            <person name="Petrosino J.F."/>
            <person name="Qin X."/>
            <person name="Muzny D.M."/>
            <person name="Ayele M."/>
            <person name="Gibbs R.A."/>
            <person name="Csorgo B."/>
            <person name="Posfai G."/>
            <person name="Weinstock G.M."/>
            <person name="Blattner F.R."/>
        </authorList>
    </citation>
    <scope>NUCLEOTIDE SEQUENCE [LARGE SCALE GENOMIC DNA]</scope>
    <source>
        <strain>K12 / DH10B</strain>
    </source>
</reference>
<comment type="similarity">
    <text evidence="1">Belongs to the UPF0325 family.</text>
</comment>
<accession>B1XD33</accession>
<proteinExistence type="inferred from homology"/>
<gene>
    <name evidence="1" type="primary">yaeH</name>
    <name type="ordered locus">ECDH10B_0143</name>
</gene>
<sequence>MYDNLKSLGITNPEEIDRYSLRQEANNDILKIYFQKDKGEFFAKSVKFKYPRQRKTVVADGVGQGYKEVQEISPNLRYIIDELDQICQRDRSEVDLKRKILDDLRHLESVVTNKISEIEADLEKLTRK</sequence>
<evidence type="ECO:0000255" key="1">
    <source>
        <dbReference type="HAMAP-Rule" id="MF_01519"/>
    </source>
</evidence>
<organism>
    <name type="scientific">Escherichia coli (strain K12 / DH10B)</name>
    <dbReference type="NCBI Taxonomy" id="316385"/>
    <lineage>
        <taxon>Bacteria</taxon>
        <taxon>Pseudomonadati</taxon>
        <taxon>Pseudomonadota</taxon>
        <taxon>Gammaproteobacteria</taxon>
        <taxon>Enterobacterales</taxon>
        <taxon>Enterobacteriaceae</taxon>
        <taxon>Escherichia</taxon>
    </lineage>
</organism>
<dbReference type="EMBL" id="CP000948">
    <property type="protein sequence ID" value="ACB01342.1"/>
    <property type="molecule type" value="Genomic_DNA"/>
</dbReference>
<dbReference type="RefSeq" id="WP_000272188.1">
    <property type="nucleotide sequence ID" value="NC_010473.1"/>
</dbReference>
<dbReference type="SMR" id="B1XD33"/>
<dbReference type="KEGG" id="ecd:ECDH10B_0143"/>
<dbReference type="HOGENOM" id="CLU_136774_0_0_6"/>
<dbReference type="HAMAP" id="MF_01519">
    <property type="entry name" value="UPF0325"/>
    <property type="match status" value="1"/>
</dbReference>
<dbReference type="InterPro" id="IPR020911">
    <property type="entry name" value="UPF0325"/>
</dbReference>
<dbReference type="NCBIfam" id="NF010213">
    <property type="entry name" value="PRK13677.1"/>
    <property type="match status" value="1"/>
</dbReference>
<dbReference type="Pfam" id="PF11944">
    <property type="entry name" value="DUF3461"/>
    <property type="match status" value="1"/>
</dbReference>
<feature type="chain" id="PRO_1000198424" description="UPF0325 protein YaeH">
    <location>
        <begin position="1"/>
        <end position="128"/>
    </location>
</feature>
<name>YAEH_ECODH</name>
<protein>
    <recommendedName>
        <fullName evidence="1">UPF0325 protein YaeH</fullName>
    </recommendedName>
</protein>